<evidence type="ECO:0000255" key="1">
    <source>
        <dbReference type="HAMAP-Rule" id="MF_01165"/>
    </source>
</evidence>
<accession>B4TPI4</accession>
<feature type="chain" id="PRO_0000380034" description="Undecaprenyl phosphate-alpha-4-amino-4-deoxy-L-arabinose arabinosyl transferase">
    <location>
        <begin position="1"/>
        <end position="548"/>
    </location>
</feature>
<feature type="transmembrane region" description="Helical" evidence="1">
    <location>
        <begin position="9"/>
        <end position="29"/>
    </location>
</feature>
<feature type="transmembrane region" description="Helical" evidence="1">
    <location>
        <begin position="82"/>
        <end position="102"/>
    </location>
</feature>
<feature type="transmembrane region" description="Helical" evidence="1">
    <location>
        <begin position="114"/>
        <end position="134"/>
    </location>
</feature>
<feature type="transmembrane region" description="Helical" evidence="1">
    <location>
        <begin position="137"/>
        <end position="157"/>
    </location>
</feature>
<feature type="transmembrane region" description="Helical" evidence="1">
    <location>
        <begin position="163"/>
        <end position="185"/>
    </location>
</feature>
<feature type="transmembrane region" description="Helical" evidence="1">
    <location>
        <begin position="205"/>
        <end position="225"/>
    </location>
</feature>
<feature type="transmembrane region" description="Helical" evidence="1">
    <location>
        <begin position="256"/>
        <end position="276"/>
    </location>
</feature>
<feature type="transmembrane region" description="Helical" evidence="1">
    <location>
        <begin position="289"/>
        <end position="309"/>
    </location>
</feature>
<feature type="transmembrane region" description="Helical" evidence="1">
    <location>
        <begin position="311"/>
        <end position="331"/>
    </location>
</feature>
<feature type="transmembrane region" description="Helical" evidence="1">
    <location>
        <begin position="345"/>
        <end position="365"/>
    </location>
</feature>
<feature type="transmembrane region" description="Helical" evidence="1">
    <location>
        <begin position="381"/>
        <end position="401"/>
    </location>
</feature>
<feature type="transmembrane region" description="Helical" evidence="1">
    <location>
        <begin position="405"/>
        <end position="425"/>
    </location>
</feature>
<organism>
    <name type="scientific">Salmonella schwarzengrund (strain CVM19633)</name>
    <dbReference type="NCBI Taxonomy" id="439843"/>
    <lineage>
        <taxon>Bacteria</taxon>
        <taxon>Pseudomonadati</taxon>
        <taxon>Pseudomonadota</taxon>
        <taxon>Gammaproteobacteria</taxon>
        <taxon>Enterobacterales</taxon>
        <taxon>Enterobacteriaceae</taxon>
        <taxon>Salmonella</taxon>
    </lineage>
</organism>
<name>ARNT_SALSV</name>
<dbReference type="EC" id="2.4.2.43" evidence="1"/>
<dbReference type="EMBL" id="CP001127">
    <property type="protein sequence ID" value="ACF88928.1"/>
    <property type="molecule type" value="Genomic_DNA"/>
</dbReference>
<dbReference type="RefSeq" id="WP_000978056.1">
    <property type="nucleotide sequence ID" value="NC_011094.1"/>
</dbReference>
<dbReference type="SMR" id="B4TPI4"/>
<dbReference type="CAZy" id="GT83">
    <property type="family name" value="Glycosyltransferase Family 83"/>
</dbReference>
<dbReference type="KEGG" id="sew:SeSA_A2529"/>
<dbReference type="HOGENOM" id="CLU_019200_2_1_6"/>
<dbReference type="UniPathway" id="UPA00037"/>
<dbReference type="Proteomes" id="UP000001865">
    <property type="component" value="Chromosome"/>
</dbReference>
<dbReference type="GO" id="GO:0005886">
    <property type="term" value="C:plasma membrane"/>
    <property type="evidence" value="ECO:0007669"/>
    <property type="project" value="UniProtKB-SubCell"/>
</dbReference>
<dbReference type="GO" id="GO:0103015">
    <property type="term" value="F:4-amino-4-deoxy-L-arabinose transferase activity"/>
    <property type="evidence" value="ECO:0007669"/>
    <property type="project" value="UniProtKB-EC"/>
</dbReference>
<dbReference type="GO" id="GO:0000030">
    <property type="term" value="F:mannosyltransferase activity"/>
    <property type="evidence" value="ECO:0007669"/>
    <property type="project" value="InterPro"/>
</dbReference>
<dbReference type="GO" id="GO:0009245">
    <property type="term" value="P:lipid A biosynthetic process"/>
    <property type="evidence" value="ECO:0007669"/>
    <property type="project" value="UniProtKB-UniRule"/>
</dbReference>
<dbReference type="GO" id="GO:0009103">
    <property type="term" value="P:lipopolysaccharide biosynthetic process"/>
    <property type="evidence" value="ECO:0007669"/>
    <property type="project" value="UniProtKB-KW"/>
</dbReference>
<dbReference type="GO" id="GO:0006493">
    <property type="term" value="P:protein O-linked glycosylation"/>
    <property type="evidence" value="ECO:0007669"/>
    <property type="project" value="InterPro"/>
</dbReference>
<dbReference type="GO" id="GO:0010041">
    <property type="term" value="P:response to iron(III) ion"/>
    <property type="evidence" value="ECO:0007669"/>
    <property type="project" value="TreeGrafter"/>
</dbReference>
<dbReference type="HAMAP" id="MF_01165">
    <property type="entry name" value="ArnT_transfer"/>
    <property type="match status" value="1"/>
</dbReference>
<dbReference type="InterPro" id="IPR022839">
    <property type="entry name" value="ArnT_tfrase"/>
</dbReference>
<dbReference type="InterPro" id="IPR003342">
    <property type="entry name" value="Glyco_trans_39/83"/>
</dbReference>
<dbReference type="InterPro" id="IPR050297">
    <property type="entry name" value="LipidA_mod_glycosyltrf_83"/>
</dbReference>
<dbReference type="NCBIfam" id="NF009784">
    <property type="entry name" value="PRK13279.1"/>
    <property type="match status" value="1"/>
</dbReference>
<dbReference type="PANTHER" id="PTHR33908">
    <property type="entry name" value="MANNOSYLTRANSFERASE YKCB-RELATED"/>
    <property type="match status" value="1"/>
</dbReference>
<dbReference type="PANTHER" id="PTHR33908:SF3">
    <property type="entry name" value="UNDECAPRENYL PHOSPHATE-ALPHA-4-AMINO-4-DEOXY-L-ARABINOSE ARABINOSYL TRANSFERASE"/>
    <property type="match status" value="1"/>
</dbReference>
<dbReference type="Pfam" id="PF02366">
    <property type="entry name" value="PMT"/>
    <property type="match status" value="1"/>
</dbReference>
<protein>
    <recommendedName>
        <fullName evidence="1">Undecaprenyl phosphate-alpha-4-amino-4-deoxy-L-arabinose arabinosyl transferase</fullName>
        <ecNumber evidence="1">2.4.2.43</ecNumber>
    </recommendedName>
    <alternativeName>
        <fullName evidence="1">4-amino-4-deoxy-L-arabinose lipid A transferase</fullName>
    </alternativeName>
    <alternativeName>
        <fullName evidence="1">Lipid IV(A) 4-amino-4-deoxy-L-arabinosyltransferase</fullName>
    </alternativeName>
    <alternativeName>
        <fullName evidence="1">Undecaprenyl phosphate-alpha-L-Ara4N transferase</fullName>
    </alternativeName>
</protein>
<proteinExistence type="inferred from homology"/>
<keyword id="KW-0997">Cell inner membrane</keyword>
<keyword id="KW-1003">Cell membrane</keyword>
<keyword id="KW-0328">Glycosyltransferase</keyword>
<keyword id="KW-0441">Lipid A biosynthesis</keyword>
<keyword id="KW-0444">Lipid biosynthesis</keyword>
<keyword id="KW-0443">Lipid metabolism</keyword>
<keyword id="KW-0448">Lipopolysaccharide biosynthesis</keyword>
<keyword id="KW-0472">Membrane</keyword>
<keyword id="KW-0808">Transferase</keyword>
<keyword id="KW-0812">Transmembrane</keyword>
<keyword id="KW-1133">Transmembrane helix</keyword>
<gene>
    <name evidence="1" type="primary">arnT</name>
    <name type="ordered locus">SeSA_A2529</name>
</gene>
<comment type="function">
    <text evidence="1">Catalyzes the transfer of the L-Ara4N moiety of the glycolipid undecaprenyl phosphate-alpha-L-Ara4N to lipid A. The modified arabinose is attached to lipid A and is required for resistance to polymyxin and cationic antimicrobial peptides.</text>
</comment>
<comment type="catalytic activity">
    <reaction evidence="1">
        <text>4-amino-4-deoxy-alpha-L-arabinopyranosyl di-trans,octa-cis-undecaprenyl phosphate + lipid IVA = lipid IIA + di-trans,octa-cis-undecaprenyl phosphate.</text>
        <dbReference type="EC" id="2.4.2.43"/>
    </reaction>
</comment>
<comment type="pathway">
    <text evidence="1">Lipopolysaccharide metabolism; 4-amino-4-deoxy-beta-L-arabinose-lipid A biosynthesis.</text>
</comment>
<comment type="subcellular location">
    <subcellularLocation>
        <location evidence="1">Cell inner membrane</location>
        <topology evidence="1">Multi-pass membrane protein</topology>
    </subcellularLocation>
</comment>
<comment type="similarity">
    <text evidence="1">Belongs to the glycosyltransferase 83 family.</text>
</comment>
<reference key="1">
    <citation type="journal article" date="2011" name="J. Bacteriol.">
        <title>Comparative genomics of 28 Salmonella enterica isolates: evidence for CRISPR-mediated adaptive sublineage evolution.</title>
        <authorList>
            <person name="Fricke W.F."/>
            <person name="Mammel M.K."/>
            <person name="McDermott P.F."/>
            <person name="Tartera C."/>
            <person name="White D.G."/>
            <person name="Leclerc J.E."/>
            <person name="Ravel J."/>
            <person name="Cebula T.A."/>
        </authorList>
    </citation>
    <scope>NUCLEOTIDE SEQUENCE [LARGE SCALE GENOMIC DNA]</scope>
    <source>
        <strain>CVM19633</strain>
    </source>
</reference>
<sequence>MMKSIRYYLAFAAFIALYYVIPVNSRLLWQPDETRYAEISREMLASGDWIVPHFLGLRYFEKPIAGYWINSLGQWLFGATNFGVRAGAILTTLLAAALVAWLTFRLWRDKRTALLASVIFLSLFAVYSIGTYAVLDPMIALWLTAGMCCFWQGMQATTRTGKIGMFLLLGATCGLGVLTKGFLALAVPVVSVLPWVIVQKRWKDFLLYGWLAVLSCFVVVLPWAIAIARREADFWHYFFWVEHIQRFAMSDAQHKAPFWYYLPVLLAGSLPWLGLLPGALKLGWRERNGAFYLLGWTIMPLLFFSIAKGKLPTYVLSCFAPIAILMARFVLHNVKEGVAALRVNGGINLVFGLVGIVAAFVVSSWGPLKSPVWTHIETYKVFCVWGVFTVWAFVGWYSLCHSQKYLLPAFCPLGLALLFGFSVPDRVMESKQPQFFVEMTQAPLASSRYILVDNVGVAAGLAWSLKRDDIMLYGHAGELRYGLSYPDVQDKFVKADDFNAWLNQHRQEGIITLVLSIAKDEDISALSLPPADNIDYQGRLVLIQYRPK</sequence>